<keyword id="KW-0028">Amino-acid biosynthesis</keyword>
<keyword id="KW-0057">Aromatic amino acid biosynthesis</keyword>
<keyword id="KW-0413">Isomerase</keyword>
<keyword id="KW-1185">Reference proteome</keyword>
<keyword id="KW-0822">Tryptophan biosynthesis</keyword>
<protein>
    <recommendedName>
        <fullName evidence="1">N-(5'-phosphoribosyl)anthranilate isomerase</fullName>
        <shortName evidence="1">PRAI</shortName>
        <ecNumber evidence="1">5.3.1.24</ecNumber>
    </recommendedName>
</protein>
<proteinExistence type="inferred from homology"/>
<comment type="catalytic activity">
    <reaction evidence="1">
        <text>N-(5-phospho-beta-D-ribosyl)anthranilate = 1-(2-carboxyphenylamino)-1-deoxy-D-ribulose 5-phosphate</text>
        <dbReference type="Rhea" id="RHEA:21540"/>
        <dbReference type="ChEBI" id="CHEBI:18277"/>
        <dbReference type="ChEBI" id="CHEBI:58613"/>
        <dbReference type="EC" id="5.3.1.24"/>
    </reaction>
</comment>
<comment type="pathway">
    <text evidence="1">Amino-acid biosynthesis; L-tryptophan biosynthesis; L-tryptophan from chorismate: step 3/5.</text>
</comment>
<comment type="similarity">
    <text evidence="1">Belongs to the TrpF family.</text>
</comment>
<sequence length="218" mass="24113">MKKPSLKYCGIHSLEDLKVTARSKADYLGFIFAESKRSVDPADVKRWCGETDTPGKKLVGVFVNENMSRMAEIVKDAGLDVIQLHGDETAADIKRLKSMTDCEIWKALPHGNDTVQSMASFAPYIDGYVIDSSVKGMRGGTGVSFSWDSVPLYIDAAQREGKRLFIAGGVNPDTIADLLKRRPPGIDLASGIEERGRKSEKLISLLEERMFEHVFISE</sequence>
<accession>Q65I34</accession>
<accession>Q62TI3</accession>
<name>TRPF_BACLD</name>
<gene>
    <name evidence="1" type="primary">trpF</name>
    <name type="ordered locus">BLi02400</name>
    <name type="ordered locus">BL02772</name>
</gene>
<reference key="1">
    <citation type="journal article" date="2004" name="J. Mol. Microbiol. Biotechnol.">
        <title>The complete genome sequence of Bacillus licheniformis DSM13, an organism with great industrial potential.</title>
        <authorList>
            <person name="Veith B."/>
            <person name="Herzberg C."/>
            <person name="Steckel S."/>
            <person name="Feesche J."/>
            <person name="Maurer K.H."/>
            <person name="Ehrenreich P."/>
            <person name="Baeumer S."/>
            <person name="Henne A."/>
            <person name="Liesegang H."/>
            <person name="Merkl R."/>
            <person name="Ehrenreich A."/>
            <person name="Gottschalk G."/>
        </authorList>
    </citation>
    <scope>NUCLEOTIDE SEQUENCE [LARGE SCALE GENOMIC DNA]</scope>
    <source>
        <strain>ATCC 14580 / DSM 13 / JCM 2505 / CCUG 7422 / NBRC 12200 / NCIMB 9375 / NCTC 10341 / NRRL NRS-1264 / Gibson 46</strain>
    </source>
</reference>
<reference key="2">
    <citation type="journal article" date="2004" name="Genome Biol.">
        <title>Complete genome sequence of the industrial bacterium Bacillus licheniformis and comparisons with closely related Bacillus species.</title>
        <authorList>
            <person name="Rey M.W."/>
            <person name="Ramaiya P."/>
            <person name="Nelson B.A."/>
            <person name="Brody-Karpin S.D."/>
            <person name="Zaretsky E.J."/>
            <person name="Tang M."/>
            <person name="Lopez de Leon A."/>
            <person name="Xiang H."/>
            <person name="Gusti V."/>
            <person name="Clausen I.G."/>
            <person name="Olsen P.B."/>
            <person name="Rasmussen M.D."/>
            <person name="Andersen J.T."/>
            <person name="Joergensen P.L."/>
            <person name="Larsen T.S."/>
            <person name="Sorokin A."/>
            <person name="Bolotin A."/>
            <person name="Lapidus A."/>
            <person name="Galleron N."/>
            <person name="Ehrlich S.D."/>
            <person name="Berka R.M."/>
        </authorList>
    </citation>
    <scope>NUCLEOTIDE SEQUENCE [LARGE SCALE GENOMIC DNA]</scope>
    <source>
        <strain>ATCC 14580 / DSM 13 / JCM 2505 / CCUG 7422 / NBRC 12200 / NCIMB 9375 / NCTC 10341 / NRRL NRS-1264 / Gibson 46</strain>
    </source>
</reference>
<feature type="chain" id="PRO_1000197082" description="N-(5'-phosphoribosyl)anthranilate isomerase">
    <location>
        <begin position="1"/>
        <end position="218"/>
    </location>
</feature>
<dbReference type="EC" id="5.3.1.24" evidence="1"/>
<dbReference type="EMBL" id="CP000002">
    <property type="protein sequence ID" value="AAU23926.2"/>
    <property type="molecule type" value="Genomic_DNA"/>
</dbReference>
<dbReference type="EMBL" id="AE017333">
    <property type="protein sequence ID" value="AAU41280.1"/>
    <property type="molecule type" value="Genomic_DNA"/>
</dbReference>
<dbReference type="RefSeq" id="WP_003182976.1">
    <property type="nucleotide sequence ID" value="NC_006322.1"/>
</dbReference>
<dbReference type="SMR" id="Q65I34"/>
<dbReference type="STRING" id="279010.BL02772"/>
<dbReference type="KEGG" id="bld:BLi02400"/>
<dbReference type="KEGG" id="bli:BL02772"/>
<dbReference type="eggNOG" id="COG0135">
    <property type="taxonomic scope" value="Bacteria"/>
</dbReference>
<dbReference type="HOGENOM" id="CLU_076364_2_0_9"/>
<dbReference type="UniPathway" id="UPA00035">
    <property type="reaction ID" value="UER00042"/>
</dbReference>
<dbReference type="Proteomes" id="UP000000606">
    <property type="component" value="Chromosome"/>
</dbReference>
<dbReference type="Bgee" id="BL02772">
    <property type="expression patterns" value="Expressed in egg cell and 7 other cell types or tissues"/>
</dbReference>
<dbReference type="GO" id="GO:0004640">
    <property type="term" value="F:phosphoribosylanthranilate isomerase activity"/>
    <property type="evidence" value="ECO:0007669"/>
    <property type="project" value="UniProtKB-UniRule"/>
</dbReference>
<dbReference type="GO" id="GO:0000162">
    <property type="term" value="P:L-tryptophan biosynthetic process"/>
    <property type="evidence" value="ECO:0007669"/>
    <property type="project" value="UniProtKB-UniRule"/>
</dbReference>
<dbReference type="CDD" id="cd00405">
    <property type="entry name" value="PRAI"/>
    <property type="match status" value="1"/>
</dbReference>
<dbReference type="Gene3D" id="3.20.20.70">
    <property type="entry name" value="Aldolase class I"/>
    <property type="match status" value="1"/>
</dbReference>
<dbReference type="HAMAP" id="MF_00135">
    <property type="entry name" value="PRAI"/>
    <property type="match status" value="1"/>
</dbReference>
<dbReference type="InterPro" id="IPR013785">
    <property type="entry name" value="Aldolase_TIM"/>
</dbReference>
<dbReference type="InterPro" id="IPR001240">
    <property type="entry name" value="PRAI_dom"/>
</dbReference>
<dbReference type="InterPro" id="IPR011060">
    <property type="entry name" value="RibuloseP-bd_barrel"/>
</dbReference>
<dbReference type="InterPro" id="IPR044643">
    <property type="entry name" value="TrpF_fam"/>
</dbReference>
<dbReference type="NCBIfam" id="NF002301">
    <property type="entry name" value="PRK01222.2-1"/>
    <property type="match status" value="1"/>
</dbReference>
<dbReference type="PANTHER" id="PTHR42894">
    <property type="entry name" value="N-(5'-PHOSPHORIBOSYL)ANTHRANILATE ISOMERASE"/>
    <property type="match status" value="1"/>
</dbReference>
<dbReference type="PANTHER" id="PTHR42894:SF1">
    <property type="entry name" value="N-(5'-PHOSPHORIBOSYL)ANTHRANILATE ISOMERASE"/>
    <property type="match status" value="1"/>
</dbReference>
<dbReference type="Pfam" id="PF00697">
    <property type="entry name" value="PRAI"/>
    <property type="match status" value="1"/>
</dbReference>
<dbReference type="SUPFAM" id="SSF51366">
    <property type="entry name" value="Ribulose-phoshate binding barrel"/>
    <property type="match status" value="1"/>
</dbReference>
<evidence type="ECO:0000255" key="1">
    <source>
        <dbReference type="HAMAP-Rule" id="MF_00135"/>
    </source>
</evidence>
<organism>
    <name type="scientific">Bacillus licheniformis (strain ATCC 14580 / DSM 13 / JCM 2505 / CCUG 7422 / NBRC 12200 / NCIMB 9375 / NCTC 10341 / NRRL NRS-1264 / Gibson 46)</name>
    <dbReference type="NCBI Taxonomy" id="279010"/>
    <lineage>
        <taxon>Bacteria</taxon>
        <taxon>Bacillati</taxon>
        <taxon>Bacillota</taxon>
        <taxon>Bacilli</taxon>
        <taxon>Bacillales</taxon>
        <taxon>Bacillaceae</taxon>
        <taxon>Bacillus</taxon>
    </lineage>
</organism>